<evidence type="ECO:0000250" key="1"/>
<evidence type="ECO:0000250" key="2">
    <source>
        <dbReference type="UniProtKB" id="P63279"/>
    </source>
</evidence>
<evidence type="ECO:0000250" key="3">
    <source>
        <dbReference type="UniProtKB" id="P63281"/>
    </source>
</evidence>
<evidence type="ECO:0000255" key="4">
    <source>
        <dbReference type="PROSITE-ProRule" id="PRU00388"/>
    </source>
</evidence>
<evidence type="ECO:0000269" key="5">
    <source>
    </source>
</evidence>
<evidence type="ECO:0000269" key="6">
    <source>
    </source>
</evidence>
<evidence type="ECO:0000269" key="7">
    <source>
    </source>
</evidence>
<evidence type="ECO:0000269" key="8">
    <source>
    </source>
</evidence>
<evidence type="ECO:0000269" key="9">
    <source>
    </source>
</evidence>
<evidence type="ECO:0000269" key="10">
    <source>
    </source>
</evidence>
<evidence type="ECO:0000269" key="11">
    <source>
    </source>
</evidence>
<evidence type="ECO:0000269" key="12">
    <source>
    </source>
</evidence>
<evidence type="ECO:0000269" key="13">
    <source>
    </source>
</evidence>
<evidence type="ECO:0000269" key="14">
    <source>
    </source>
</evidence>
<evidence type="ECO:0007829" key="15">
    <source>
        <dbReference type="PDB" id="2UYZ"/>
    </source>
</evidence>
<name>UBC9_MOUSE</name>
<protein>
    <recommendedName>
        <fullName>SUMO-conjugating enzyme UBC9</fullName>
        <ecNumber>2.3.2.-</ecNumber>
    </recommendedName>
    <alternativeName>
        <fullName>RING-type E3 SUMO transferase UBC9</fullName>
    </alternativeName>
    <alternativeName>
        <fullName>SUMO-protein ligase</fullName>
    </alternativeName>
    <alternativeName>
        <fullName>Ubiquitin carrier protein 9</fullName>
        <shortName>mUBC9</shortName>
    </alternativeName>
    <alternativeName>
        <fullName>Ubiquitin carrier protein I</fullName>
    </alternativeName>
    <alternativeName>
        <fullName>Ubiquitin-conjugating enzyme E2 I</fullName>
    </alternativeName>
    <alternativeName>
        <fullName>Ubiquitin-protein ligase I</fullName>
    </alternativeName>
</protein>
<reference key="1">
    <citation type="journal article" date="1996" name="Blood">
        <title>E3, a hematopoietic-specific transcript directly regulated by the retinoic acid receptor alpha.</title>
        <authorList>
            <person name="Scott L.M."/>
            <person name="Mueller L."/>
            <person name="Collins S.J."/>
        </authorList>
    </citation>
    <scope>NUCLEOTIDE SEQUENCE [MRNA]</scope>
    <source>
        <strain>MDF1</strain>
        <tissue>Promyelocytic leukemia</tissue>
    </source>
</reference>
<reference key="2">
    <citation type="journal article" date="1996" name="J. Biol. Chem.">
        <title>mUBC9, a novel adenovirus E1A-interacting protein that complements a yeast cell cycle defect.</title>
        <authorList>
            <person name="Hateboer G."/>
            <person name="Hijmans E.M."/>
            <person name="Nooij J.B.D."/>
            <person name="Schlenker S."/>
            <person name="Jentsch S."/>
            <person name="Bernards R."/>
        </authorList>
    </citation>
    <scope>NUCLEOTIDE SEQUENCE [MRNA]</scope>
    <scope>INTERACTION WITH ADENOVIRUS TYPE 5 AND TYPE 12 E1A</scope>
</reference>
<reference key="3">
    <citation type="journal article" date="1996" name="Proc. Natl. Acad. Sci. U.S.A.">
        <title>Mammalian ubiquitin-conjugating enzyme Ubc9 interacts with Rad51 recombination protein and localizes in synaptonemal complexes.</title>
        <authorList>
            <person name="Kovalenko O.V."/>
            <person name="Plug A.W."/>
            <person name="Haaf T."/>
            <person name="Gonda D.K."/>
            <person name="Ashley T."/>
            <person name="Ward D.C."/>
            <person name="Radding C.M."/>
            <person name="Golub E.I."/>
        </authorList>
    </citation>
    <scope>NUCLEOTIDE SEQUENCE [MRNA]</scope>
    <scope>SUBCELLULAR LOCATION</scope>
</reference>
<reference key="4">
    <citation type="journal article" date="1997" name="Gene">
        <title>The mUBC9 murine ubiquitin conjugating enzyme interacts with the E2A transcription factors.</title>
        <authorList>
            <person name="Loveys D.A."/>
            <person name="Streiff M.B."/>
            <person name="Schaefer T.S."/>
            <person name="Kato G.J."/>
        </authorList>
    </citation>
    <scope>NUCLEOTIDE SEQUENCE [MRNA]</scope>
    <scope>TISSUE SPECIFICITY</scope>
    <scope>INTERACTION WITH TCF3</scope>
    <source>
        <strain>BALB/cJ</strain>
        <tissue>Fibroblast</tissue>
    </source>
</reference>
<reference key="5">
    <citation type="journal article" date="1997" name="Proc. Natl. Acad. Sci. U.S.A.">
        <title>Direct involvement of the ubiquitin-conjugating enzyme Ubc9/Hus5 in the degradation of IkappaBalpha.</title>
        <authorList>
            <person name="Tashiro K."/>
            <person name="Pando M.P."/>
            <person name="Kanegae Y."/>
            <person name="Wamsley P.M."/>
            <person name="Inoue S."/>
            <person name="Verma I.M."/>
        </authorList>
    </citation>
    <scope>NUCLEOTIDE SEQUENCE [MRNA]</scope>
    <scope>SUBCELLULAR LOCATION</scope>
    <source>
        <tissue>B-cell lymphoma</tissue>
    </source>
</reference>
<reference key="6">
    <citation type="submission" date="1997-09" db="EMBL/GenBank/DDBJ databases">
        <authorList>
            <person name="Weber B."/>
        </authorList>
    </citation>
    <scope>NUCLEOTIDE SEQUENCE [MRNA]</scope>
    <source>
        <strain>PJS1</strain>
    </source>
</reference>
<reference key="7">
    <citation type="journal article" date="2005" name="Science">
        <title>The transcriptional landscape of the mammalian genome.</title>
        <authorList>
            <person name="Carninci P."/>
            <person name="Kasukawa T."/>
            <person name="Katayama S."/>
            <person name="Gough J."/>
            <person name="Frith M.C."/>
            <person name="Maeda N."/>
            <person name="Oyama R."/>
            <person name="Ravasi T."/>
            <person name="Lenhard B."/>
            <person name="Wells C."/>
            <person name="Kodzius R."/>
            <person name="Shimokawa K."/>
            <person name="Bajic V.B."/>
            <person name="Brenner S.E."/>
            <person name="Batalov S."/>
            <person name="Forrest A.R."/>
            <person name="Zavolan M."/>
            <person name="Davis M.J."/>
            <person name="Wilming L.G."/>
            <person name="Aidinis V."/>
            <person name="Allen J.E."/>
            <person name="Ambesi-Impiombato A."/>
            <person name="Apweiler R."/>
            <person name="Aturaliya R.N."/>
            <person name="Bailey T.L."/>
            <person name="Bansal M."/>
            <person name="Baxter L."/>
            <person name="Beisel K.W."/>
            <person name="Bersano T."/>
            <person name="Bono H."/>
            <person name="Chalk A.M."/>
            <person name="Chiu K.P."/>
            <person name="Choudhary V."/>
            <person name="Christoffels A."/>
            <person name="Clutterbuck D.R."/>
            <person name="Crowe M.L."/>
            <person name="Dalla E."/>
            <person name="Dalrymple B.P."/>
            <person name="de Bono B."/>
            <person name="Della Gatta G."/>
            <person name="di Bernardo D."/>
            <person name="Down T."/>
            <person name="Engstrom P."/>
            <person name="Fagiolini M."/>
            <person name="Faulkner G."/>
            <person name="Fletcher C.F."/>
            <person name="Fukushima T."/>
            <person name="Furuno M."/>
            <person name="Futaki S."/>
            <person name="Gariboldi M."/>
            <person name="Georgii-Hemming P."/>
            <person name="Gingeras T.R."/>
            <person name="Gojobori T."/>
            <person name="Green R.E."/>
            <person name="Gustincich S."/>
            <person name="Harbers M."/>
            <person name="Hayashi Y."/>
            <person name="Hensch T.K."/>
            <person name="Hirokawa N."/>
            <person name="Hill D."/>
            <person name="Huminiecki L."/>
            <person name="Iacono M."/>
            <person name="Ikeo K."/>
            <person name="Iwama A."/>
            <person name="Ishikawa T."/>
            <person name="Jakt M."/>
            <person name="Kanapin A."/>
            <person name="Katoh M."/>
            <person name="Kawasawa Y."/>
            <person name="Kelso J."/>
            <person name="Kitamura H."/>
            <person name="Kitano H."/>
            <person name="Kollias G."/>
            <person name="Krishnan S.P."/>
            <person name="Kruger A."/>
            <person name="Kummerfeld S.K."/>
            <person name="Kurochkin I.V."/>
            <person name="Lareau L.F."/>
            <person name="Lazarevic D."/>
            <person name="Lipovich L."/>
            <person name="Liu J."/>
            <person name="Liuni S."/>
            <person name="McWilliam S."/>
            <person name="Madan Babu M."/>
            <person name="Madera M."/>
            <person name="Marchionni L."/>
            <person name="Matsuda H."/>
            <person name="Matsuzawa S."/>
            <person name="Miki H."/>
            <person name="Mignone F."/>
            <person name="Miyake S."/>
            <person name="Morris K."/>
            <person name="Mottagui-Tabar S."/>
            <person name="Mulder N."/>
            <person name="Nakano N."/>
            <person name="Nakauchi H."/>
            <person name="Ng P."/>
            <person name="Nilsson R."/>
            <person name="Nishiguchi S."/>
            <person name="Nishikawa S."/>
            <person name="Nori F."/>
            <person name="Ohara O."/>
            <person name="Okazaki Y."/>
            <person name="Orlando V."/>
            <person name="Pang K.C."/>
            <person name="Pavan W.J."/>
            <person name="Pavesi G."/>
            <person name="Pesole G."/>
            <person name="Petrovsky N."/>
            <person name="Piazza S."/>
            <person name="Reed J."/>
            <person name="Reid J.F."/>
            <person name="Ring B.Z."/>
            <person name="Ringwald M."/>
            <person name="Rost B."/>
            <person name="Ruan Y."/>
            <person name="Salzberg S.L."/>
            <person name="Sandelin A."/>
            <person name="Schneider C."/>
            <person name="Schoenbach C."/>
            <person name="Sekiguchi K."/>
            <person name="Semple C.A."/>
            <person name="Seno S."/>
            <person name="Sessa L."/>
            <person name="Sheng Y."/>
            <person name="Shibata Y."/>
            <person name="Shimada H."/>
            <person name="Shimada K."/>
            <person name="Silva D."/>
            <person name="Sinclair B."/>
            <person name="Sperling S."/>
            <person name="Stupka E."/>
            <person name="Sugiura K."/>
            <person name="Sultana R."/>
            <person name="Takenaka Y."/>
            <person name="Taki K."/>
            <person name="Tammoja K."/>
            <person name="Tan S.L."/>
            <person name="Tang S."/>
            <person name="Taylor M.S."/>
            <person name="Tegner J."/>
            <person name="Teichmann S.A."/>
            <person name="Ueda H.R."/>
            <person name="van Nimwegen E."/>
            <person name="Verardo R."/>
            <person name="Wei C.L."/>
            <person name="Yagi K."/>
            <person name="Yamanishi H."/>
            <person name="Zabarovsky E."/>
            <person name="Zhu S."/>
            <person name="Zimmer A."/>
            <person name="Hide W."/>
            <person name="Bult C."/>
            <person name="Grimmond S.M."/>
            <person name="Teasdale R.D."/>
            <person name="Liu E.T."/>
            <person name="Brusic V."/>
            <person name="Quackenbush J."/>
            <person name="Wahlestedt C."/>
            <person name="Mattick J.S."/>
            <person name="Hume D.A."/>
            <person name="Kai C."/>
            <person name="Sasaki D."/>
            <person name="Tomaru Y."/>
            <person name="Fukuda S."/>
            <person name="Kanamori-Katayama M."/>
            <person name="Suzuki M."/>
            <person name="Aoki J."/>
            <person name="Arakawa T."/>
            <person name="Iida J."/>
            <person name="Imamura K."/>
            <person name="Itoh M."/>
            <person name="Kato T."/>
            <person name="Kawaji H."/>
            <person name="Kawagashira N."/>
            <person name="Kawashima T."/>
            <person name="Kojima M."/>
            <person name="Kondo S."/>
            <person name="Konno H."/>
            <person name="Nakano K."/>
            <person name="Ninomiya N."/>
            <person name="Nishio T."/>
            <person name="Okada M."/>
            <person name="Plessy C."/>
            <person name="Shibata K."/>
            <person name="Shiraki T."/>
            <person name="Suzuki S."/>
            <person name="Tagami M."/>
            <person name="Waki K."/>
            <person name="Watahiki A."/>
            <person name="Okamura-Oho Y."/>
            <person name="Suzuki H."/>
            <person name="Kawai J."/>
            <person name="Hayashizaki Y."/>
        </authorList>
    </citation>
    <scope>NUCLEOTIDE SEQUENCE [LARGE SCALE MRNA]</scope>
    <source>
        <strain>BALB/cJ</strain>
        <strain>C57BL/6J</strain>
        <strain>NOD</strain>
        <tissue>Bone marrow</tissue>
        <tissue>Head</tissue>
        <tissue>Heart</tissue>
        <tissue>Kidney</tissue>
        <tissue>Liver</tissue>
        <tissue>Lung</tissue>
        <tissue>Thymus</tissue>
    </source>
</reference>
<reference key="8">
    <citation type="journal article" date="2009" name="PLoS Biol.">
        <title>Lineage-specific biology revealed by a finished genome assembly of the mouse.</title>
        <authorList>
            <person name="Church D.M."/>
            <person name="Goodstadt L."/>
            <person name="Hillier L.W."/>
            <person name="Zody M.C."/>
            <person name="Goldstein S."/>
            <person name="She X."/>
            <person name="Bult C.J."/>
            <person name="Agarwala R."/>
            <person name="Cherry J.L."/>
            <person name="DiCuccio M."/>
            <person name="Hlavina W."/>
            <person name="Kapustin Y."/>
            <person name="Meric P."/>
            <person name="Maglott D."/>
            <person name="Birtle Z."/>
            <person name="Marques A.C."/>
            <person name="Graves T."/>
            <person name="Zhou S."/>
            <person name="Teague B."/>
            <person name="Potamousis K."/>
            <person name="Churas C."/>
            <person name="Place M."/>
            <person name="Herschleb J."/>
            <person name="Runnheim R."/>
            <person name="Forrest D."/>
            <person name="Amos-Landgraf J."/>
            <person name="Schwartz D.C."/>
            <person name="Cheng Z."/>
            <person name="Lindblad-Toh K."/>
            <person name="Eichler E.E."/>
            <person name="Ponting C.P."/>
        </authorList>
    </citation>
    <scope>NUCLEOTIDE SEQUENCE [LARGE SCALE GENOMIC DNA]</scope>
    <source>
        <strain>C57BL/6J</strain>
    </source>
</reference>
<reference key="9">
    <citation type="journal article" date="1999" name="Proc. Natl. Acad. Sci. U.S.A.">
        <title>Covalent modification of the homeodomain-interacting protein kinase 2 (HIPK2) by the ubiquitin-like protein SUMO-1.</title>
        <authorList>
            <person name="Kim Y.H."/>
            <person name="Choi C.Y."/>
            <person name="Kim Y."/>
        </authorList>
    </citation>
    <scope>INTERACTION WITH HIPK1 AND HIPK2</scope>
</reference>
<reference key="10">
    <citation type="journal article" date="2005" name="Dev. Cell">
        <title>The SUMO pathway is essential for nuclear integrity and chromosome segregation in mice.</title>
        <authorList>
            <person name="Nacerddine K."/>
            <person name="Lehembre F."/>
            <person name="Bhaumik M."/>
            <person name="Artus J."/>
            <person name="Cohen-Tannoudji M."/>
            <person name="Babinet C."/>
            <person name="Pandolfi P.P."/>
            <person name="Dejean A."/>
        </authorList>
    </citation>
    <scope>FUNCTION</scope>
    <scope>DISRUPTION PHENOTYPE</scope>
</reference>
<reference key="11">
    <citation type="journal article" date="2003" name="FEBS Lett.">
        <title>A novel protein phosphatase 2C family member (PP2Czeta) is able to associate with ubiquitin conjugating enzyme 9.</title>
        <authorList>
            <person name="Kashiwaba M."/>
            <person name="Katsura K."/>
            <person name="Ohnishi M."/>
            <person name="Sasaki M."/>
            <person name="Tanaka H."/>
            <person name="Nishimune Y."/>
            <person name="Kobayashi T."/>
            <person name="Tamura S."/>
        </authorList>
    </citation>
    <scope>INTERACTION WITH PPM1J</scope>
</reference>
<reference key="12">
    <citation type="journal article" date="2006" name="J. Virol.">
        <title>Interaction of moloney murine leukemia virus capsid with Ubc9 and PIASy mediates SUMO-1 addition required early in infection.</title>
        <authorList>
            <person name="Yueh A."/>
            <person name="Leung J."/>
            <person name="Bhattacharyya S."/>
            <person name="Perrone L.A."/>
            <person name="de los Santos K."/>
            <person name="Pu S.-Y."/>
            <person name="Goff S.P."/>
        </authorList>
    </citation>
    <scope>INTERACTION WITH MOMLV CA</scope>
</reference>
<reference key="13">
    <citation type="journal article" date="2007" name="Nat. Struct. Mol. Biol.">
        <title>SUMOylation of Tr2 orphan receptor involves Pml and fine-tunes Oct4 expression in stem cells.</title>
        <authorList>
            <person name="Park S.W."/>
            <person name="Hu X."/>
            <person name="Gupta P."/>
            <person name="Lin Y.P."/>
            <person name="Ha S.G."/>
            <person name="Wei L.N."/>
        </authorList>
    </citation>
    <scope>INTERACTION WITH NR2C1</scope>
    <scope>FUNCTION IN NR2C1 SUMOYLATION</scope>
</reference>
<reference key="14">
    <citation type="journal article" date="2008" name="Genes Cells">
        <title>BCL11A is a SUMOylated protein and recruits SUMO-conjugation enzymes in its nuclear body.</title>
        <authorList>
            <person name="Kuwata T."/>
            <person name="Nakamura T."/>
        </authorList>
    </citation>
    <scope>SUBCELLULAR LOCATION</scope>
</reference>
<reference key="15">
    <citation type="journal article" date="2010" name="Cell">
        <title>A tissue-specific atlas of mouse protein phosphorylation and expression.</title>
        <authorList>
            <person name="Huttlin E.L."/>
            <person name="Jedrychowski M.P."/>
            <person name="Elias J.E."/>
            <person name="Goswami T."/>
            <person name="Rad R."/>
            <person name="Beausoleil S.A."/>
            <person name="Villen J."/>
            <person name="Haas W."/>
            <person name="Sowa M.E."/>
            <person name="Gygi S.P."/>
        </authorList>
    </citation>
    <scope>IDENTIFICATION BY MASS SPECTROMETRY [LARGE SCALE ANALYSIS]</scope>
    <source>
        <tissue>Brain</tissue>
        <tissue>Brown adipose tissue</tissue>
        <tissue>Heart</tissue>
        <tissue>Kidney</tissue>
        <tissue>Liver</tissue>
        <tissue>Lung</tissue>
        <tissue>Pancreas</tissue>
        <tissue>Spleen</tissue>
        <tissue>Testis</tissue>
    </source>
</reference>
<reference key="16">
    <citation type="journal article" date="2012" name="Cell Cycle">
        <title>The RAX/PACT-PKR stress response pathway promotes p53 sumoylation and activation, leading to G(1) arrest.</title>
        <authorList>
            <person name="Bennett R.L."/>
            <person name="Pan Y."/>
            <person name="Christian J."/>
            <person name="Hui T."/>
            <person name="May W.S. Jr."/>
        </authorList>
    </citation>
    <scope>FUNCTION</scope>
    <scope>INTERACTION WITH PRKRA AND TP53</scope>
</reference>
<reference key="17">
    <citation type="journal article" date="2015" name="Cell Rep.">
        <title>SUMOylation is an inhibitory constraint that regulates the prion-like aggregation and activity of CPEB3.</title>
        <authorList>
            <person name="Drisaldi B."/>
            <person name="Colnaghi L."/>
            <person name="Fioriti L."/>
            <person name="Rao N."/>
            <person name="Myers C."/>
            <person name="Snyder A.M."/>
            <person name="Metzger D.J."/>
            <person name="Tarasoff J."/>
            <person name="Konstantinov E."/>
            <person name="Fraser P.E."/>
            <person name="Manley J.L."/>
            <person name="Kandel E.R."/>
        </authorList>
    </citation>
    <scope>INTERACTION WITH CPEB3</scope>
</reference>
<reference key="18">
    <citation type="journal article" date="1997" name="J. Biol. Chem.">
        <title>Crystal structure of murine/human Ubc9 provides insight into the variability of the ubiquitin-conjugating system.</title>
        <authorList>
            <person name="Tong H."/>
            <person name="Hateboer G."/>
            <person name="Perrakis A."/>
            <person name="Bernards R."/>
            <person name="Sixma T.K."/>
        </authorList>
    </citation>
    <scope>X-RAY CRYSTALLOGRAPHY (2.0 ANGSTROMS)</scope>
</reference>
<accession>P63280</accession>
<accession>P50550</accession>
<accession>Q15698</accession>
<accession>Q6RUT3</accession>
<accession>Q86VB3</accession>
<feature type="initiator methionine" description="Removed" evidence="2">
    <location>
        <position position="1"/>
    </location>
</feature>
<feature type="chain" id="PRO_0000082456" description="SUMO-conjugating enzyme UBC9">
    <location>
        <begin position="2"/>
        <end position="158"/>
    </location>
</feature>
<feature type="domain" description="UBC core" evidence="4">
    <location>
        <begin position="4"/>
        <end position="157"/>
    </location>
</feature>
<feature type="region of interest" description="Interaction with SUMO1" evidence="1">
    <location>
        <begin position="13"/>
        <end position="18"/>
    </location>
</feature>
<feature type="active site" description="Glycyl thioester intermediate" evidence="4">
    <location>
        <position position="93"/>
    </location>
</feature>
<feature type="site" description="Interaction with RANBP2" evidence="1">
    <location>
        <position position="4"/>
    </location>
</feature>
<feature type="site" description="Interaction with RANBP2" evidence="1">
    <location>
        <position position="25"/>
    </location>
</feature>
<feature type="site" description="Interaction with RANBP2" evidence="1">
    <location>
        <position position="57"/>
    </location>
</feature>
<feature type="site" description="Substrate binding" evidence="1">
    <location>
        <begin position="100"/>
        <end position="101"/>
    </location>
</feature>
<feature type="modified residue" description="N-acetylserine" evidence="2">
    <location>
        <position position="2"/>
    </location>
</feature>
<feature type="modified residue" description="N6-acetyllysine" evidence="2">
    <location>
        <position position="65"/>
    </location>
</feature>
<feature type="modified residue" description="Phosphoserine; by CDK1" evidence="2">
    <location>
        <position position="71"/>
    </location>
</feature>
<feature type="cross-link" description="Glycyl lysine isopeptide (Lys-Gly) (interchain with G-Cter in SUMO2); alternate" evidence="2">
    <location>
        <position position="18"/>
    </location>
</feature>
<feature type="cross-link" description="Glycyl lysine isopeptide (Lys-Gly) (interchain with G-Cter in ubiquitin); alternate" evidence="2">
    <location>
        <position position="18"/>
    </location>
</feature>
<feature type="cross-link" description="Glycyl lysine isopeptide (Lys-Gly) (interchain with G-Cter in SUMO2)" evidence="2">
    <location>
        <position position="48"/>
    </location>
</feature>
<feature type="cross-link" description="Glycyl lysine isopeptide (Lys-Gly) (interchain with G-Cter in SUMO1); alternate" evidence="2">
    <location>
        <position position="49"/>
    </location>
</feature>
<feature type="cross-link" description="Glycyl lysine isopeptide (Lys-Gly) (interchain with G-Cter in SUMO2); alternate" evidence="2">
    <location>
        <position position="49"/>
    </location>
</feature>
<feature type="cross-link" description="Glycyl lysine isopeptide (Lys-Gly) (interchain with G-Cter in SUMO2)" evidence="2">
    <location>
        <position position="101"/>
    </location>
</feature>
<feature type="helix" evidence="15">
    <location>
        <begin position="4"/>
        <end position="18"/>
    </location>
</feature>
<feature type="strand" evidence="15">
    <location>
        <begin position="25"/>
        <end position="30"/>
    </location>
</feature>
<feature type="strand" evidence="15">
    <location>
        <begin position="36"/>
        <end position="46"/>
    </location>
</feature>
<feature type="turn" evidence="15">
    <location>
        <begin position="52"/>
        <end position="55"/>
    </location>
</feature>
<feature type="strand" evidence="15">
    <location>
        <begin position="57"/>
        <end position="63"/>
    </location>
</feature>
<feature type="turn" evidence="15">
    <location>
        <begin position="66"/>
        <end position="69"/>
    </location>
</feature>
<feature type="strand" evidence="15">
    <location>
        <begin position="74"/>
        <end position="79"/>
    </location>
</feature>
<feature type="strand" evidence="15">
    <location>
        <begin position="90"/>
        <end position="92"/>
    </location>
</feature>
<feature type="helix" evidence="15">
    <location>
        <begin position="95"/>
        <end position="97"/>
    </location>
</feature>
<feature type="turn" evidence="15">
    <location>
        <begin position="99"/>
        <end position="102"/>
    </location>
</feature>
<feature type="helix" evidence="15">
    <location>
        <begin position="109"/>
        <end position="121"/>
    </location>
</feature>
<feature type="helix" evidence="15">
    <location>
        <begin position="131"/>
        <end position="139"/>
    </location>
</feature>
<feature type="helix" evidence="15">
    <location>
        <begin position="141"/>
        <end position="154"/>
    </location>
</feature>
<sequence length="158" mass="18007">MSGIALSRLAQERKAWRKDHPFGFVAVPTKNPDGTMNLMNWECAIPGKKGTPWEGGLFKLRMLFKDDYPSSPPKCKFEPPLFHPNVYPSGTVCLSILEEDKDWRPAITIKQILLGIQELLNEPNIQDPAQAEAYTIYCQNRVEYEKRVRAQAKKFAPS</sequence>
<keyword id="KW-0002">3D-structure</keyword>
<keyword id="KW-0007">Acetylation</keyword>
<keyword id="KW-0067">ATP-binding</keyword>
<keyword id="KW-0131">Cell cycle</keyword>
<keyword id="KW-0132">Cell division</keyword>
<keyword id="KW-0159">Chromosome partition</keyword>
<keyword id="KW-0963">Cytoplasm</keyword>
<keyword id="KW-0217">Developmental protein</keyword>
<keyword id="KW-0945">Host-virus interaction</keyword>
<keyword id="KW-1017">Isopeptide bond</keyword>
<keyword id="KW-0498">Mitosis</keyword>
<keyword id="KW-0547">Nucleotide-binding</keyword>
<keyword id="KW-0539">Nucleus</keyword>
<keyword id="KW-0597">Phosphoprotein</keyword>
<keyword id="KW-1185">Reference proteome</keyword>
<keyword id="KW-0808">Transferase</keyword>
<keyword id="KW-0832">Ubl conjugation</keyword>
<keyword id="KW-0833">Ubl conjugation pathway</keyword>
<dbReference type="EC" id="2.3.2.-"/>
<dbReference type="EMBL" id="U94402">
    <property type="protein sequence ID" value="AAB52424.1"/>
    <property type="molecule type" value="mRNA"/>
</dbReference>
<dbReference type="EMBL" id="X99739">
    <property type="protein sequence ID" value="CAA68072.1"/>
    <property type="molecule type" value="mRNA"/>
</dbReference>
<dbReference type="EMBL" id="U31934">
    <property type="protein sequence ID" value="AAB02182.1"/>
    <property type="molecule type" value="mRNA"/>
</dbReference>
<dbReference type="EMBL" id="U76416">
    <property type="protein sequence ID" value="AAB18790.1"/>
    <property type="molecule type" value="mRNA"/>
</dbReference>
<dbReference type="EMBL" id="U82627">
    <property type="protein sequence ID" value="AAB48446.1"/>
    <property type="molecule type" value="mRNA"/>
</dbReference>
<dbReference type="EMBL" id="X97575">
    <property type="protein sequence ID" value="CAA66188.1"/>
    <property type="molecule type" value="mRNA"/>
</dbReference>
<dbReference type="EMBL" id="AK003141">
    <property type="protein sequence ID" value="BAB22599.1"/>
    <property type="molecule type" value="mRNA"/>
</dbReference>
<dbReference type="EMBL" id="AK005058">
    <property type="protein sequence ID" value="BAB23783.1"/>
    <property type="molecule type" value="mRNA"/>
</dbReference>
<dbReference type="EMBL" id="AK011239">
    <property type="protein sequence ID" value="BAB27487.1"/>
    <property type="molecule type" value="mRNA"/>
</dbReference>
<dbReference type="EMBL" id="AK012282">
    <property type="protein sequence ID" value="BAB28140.1"/>
    <property type="molecule type" value="mRNA"/>
</dbReference>
<dbReference type="EMBL" id="AK088508">
    <property type="protein sequence ID" value="BAC40395.1"/>
    <property type="molecule type" value="mRNA"/>
</dbReference>
<dbReference type="EMBL" id="AK150575">
    <property type="protein sequence ID" value="BAE29670.1"/>
    <property type="molecule type" value="mRNA"/>
</dbReference>
<dbReference type="EMBL" id="AK160014">
    <property type="protein sequence ID" value="BAE35560.1"/>
    <property type="molecule type" value="mRNA"/>
</dbReference>
<dbReference type="EMBL" id="AK160988">
    <property type="protein sequence ID" value="BAE36134.1"/>
    <property type="molecule type" value="mRNA"/>
</dbReference>
<dbReference type="EMBL" id="AK165606">
    <property type="protein sequence ID" value="BAE38290.1"/>
    <property type="molecule type" value="mRNA"/>
</dbReference>
<dbReference type="EMBL" id="AK165615">
    <property type="protein sequence ID" value="BAE38295.1"/>
    <property type="molecule type" value="mRNA"/>
</dbReference>
<dbReference type="EMBL" id="AK166016">
    <property type="protein sequence ID" value="BAE38521.1"/>
    <property type="molecule type" value="mRNA"/>
</dbReference>
<dbReference type="EMBL" id="AK166657">
    <property type="protein sequence ID" value="BAE38922.1"/>
    <property type="molecule type" value="mRNA"/>
</dbReference>
<dbReference type="EMBL" id="AK166930">
    <property type="protein sequence ID" value="BAE39124.1"/>
    <property type="molecule type" value="mRNA"/>
</dbReference>
<dbReference type="EMBL" id="AK167162">
    <property type="protein sequence ID" value="BAE39303.1"/>
    <property type="molecule type" value="mRNA"/>
</dbReference>
<dbReference type="EMBL" id="AK168212">
    <property type="protein sequence ID" value="BAE40170.1"/>
    <property type="molecule type" value="mRNA"/>
</dbReference>
<dbReference type="EMBL" id="AK168706">
    <property type="protein sequence ID" value="BAE40548.1"/>
    <property type="molecule type" value="mRNA"/>
</dbReference>
<dbReference type="EMBL" id="AK168766">
    <property type="protein sequence ID" value="BAE40602.1"/>
    <property type="molecule type" value="mRNA"/>
</dbReference>
<dbReference type="EMBL" id="AY491413">
    <property type="protein sequence ID" value="AAS21651.1"/>
    <property type="molecule type" value="Genomic_DNA"/>
</dbReference>
<dbReference type="CCDS" id="CCDS28513.1"/>
<dbReference type="RefSeq" id="NP_001171080.1">
    <property type="nucleotide sequence ID" value="NM_001177609.1"/>
</dbReference>
<dbReference type="RefSeq" id="NP_001171081.1">
    <property type="nucleotide sequence ID" value="NM_001177610.1"/>
</dbReference>
<dbReference type="RefSeq" id="NP_001344623.1">
    <property type="nucleotide sequence ID" value="NM_001357694.1"/>
</dbReference>
<dbReference type="RefSeq" id="NP_035795.1">
    <property type="nucleotide sequence ID" value="NM_011665.4"/>
</dbReference>
<dbReference type="RefSeq" id="XP_006524111.1">
    <property type="nucleotide sequence ID" value="XM_006524048.3"/>
</dbReference>
<dbReference type="RefSeq" id="XP_006524112.1">
    <property type="nucleotide sequence ID" value="XM_006524049.5"/>
</dbReference>
<dbReference type="RefSeq" id="XP_036016378.1">
    <property type="nucleotide sequence ID" value="XM_036160485.1"/>
</dbReference>
<dbReference type="PDB" id="1U9A">
    <property type="method" value="X-ray"/>
    <property type="resolution" value="2.00 A"/>
    <property type="chains" value="A=1-158"/>
</dbReference>
<dbReference type="PDB" id="1U9B">
    <property type="method" value="X-ray"/>
    <property type="resolution" value="2.00 A"/>
    <property type="chains" value="A=1-158"/>
</dbReference>
<dbReference type="PDB" id="2UYZ">
    <property type="method" value="X-ray"/>
    <property type="resolution" value="1.40 A"/>
    <property type="chains" value="A=1-158"/>
</dbReference>
<dbReference type="PDB" id="2VRR">
    <property type="method" value="X-ray"/>
    <property type="resolution" value="2.22 A"/>
    <property type="chains" value="A=1-158"/>
</dbReference>
<dbReference type="PDBsum" id="1U9A"/>
<dbReference type="PDBsum" id="1U9B"/>
<dbReference type="PDBsum" id="2UYZ"/>
<dbReference type="PDBsum" id="2VRR"/>
<dbReference type="BMRB" id="P63280"/>
<dbReference type="SMR" id="P63280"/>
<dbReference type="BioGRID" id="204408">
    <property type="interactions" value="169"/>
</dbReference>
<dbReference type="ComplexPortal" id="CPX-4921">
    <property type="entry name" value="E3 ligase (RANBP2) complex"/>
</dbReference>
<dbReference type="CORUM" id="P63280"/>
<dbReference type="DIP" id="DIP-29276N"/>
<dbReference type="FunCoup" id="P63280">
    <property type="interactions" value="4169"/>
</dbReference>
<dbReference type="IntAct" id="P63280">
    <property type="interactions" value="57"/>
</dbReference>
<dbReference type="MINT" id="P63280"/>
<dbReference type="STRING" id="10090.ENSMUSP00000134169"/>
<dbReference type="iPTMnet" id="P63280"/>
<dbReference type="PhosphoSitePlus" id="P63280"/>
<dbReference type="SwissPalm" id="P63280"/>
<dbReference type="jPOST" id="P63280"/>
<dbReference type="PaxDb" id="10090-ENSMUSP00000134169"/>
<dbReference type="PeptideAtlas" id="P63280"/>
<dbReference type="ProteomicsDB" id="297783"/>
<dbReference type="Pumba" id="P63280"/>
<dbReference type="TopDownProteomics" id="P63280"/>
<dbReference type="Antibodypedia" id="1138">
    <property type="antibodies" value="524 antibodies from 43 providers"/>
</dbReference>
<dbReference type="DNASU" id="22196"/>
<dbReference type="Ensembl" id="ENSMUST00000049911.17">
    <property type="protein sequence ID" value="ENSMUSP00000055714.10"/>
    <property type="gene ID" value="ENSMUSG00000015120.17"/>
</dbReference>
<dbReference type="Ensembl" id="ENSMUST00000172462.3">
    <property type="protein sequence ID" value="ENSMUSP00000159857.1"/>
    <property type="gene ID" value="ENSMUSG00000015120.17"/>
</dbReference>
<dbReference type="Ensembl" id="ENSMUST00000172520.3">
    <property type="protein sequence ID" value="ENSMUSP00000133311.3"/>
    <property type="gene ID" value="ENSMUSG00000015120.17"/>
</dbReference>
<dbReference type="Ensembl" id="ENSMUST00000173084.9">
    <property type="protein sequence ID" value="ENSMUSP00000134261.2"/>
    <property type="gene ID" value="ENSMUSG00000015120.17"/>
</dbReference>
<dbReference type="Ensembl" id="ENSMUST00000173231.3">
    <property type="protein sequence ID" value="ENSMUSP00000133338.3"/>
    <property type="gene ID" value="ENSMUSG00000015120.17"/>
</dbReference>
<dbReference type="Ensembl" id="ENSMUST00000173621.9">
    <property type="protein sequence ID" value="ENSMUSP00000134161.3"/>
    <property type="gene ID" value="ENSMUSG00000015120.17"/>
</dbReference>
<dbReference type="Ensembl" id="ENSMUST00000173713.9">
    <property type="protein sequence ID" value="ENSMUSP00000134491.2"/>
    <property type="gene ID" value="ENSMUSG00000015120.17"/>
</dbReference>
<dbReference type="Ensembl" id="ENSMUST00000174001.9">
    <property type="protein sequence ID" value="ENSMUSP00000134450.2"/>
    <property type="gene ID" value="ENSMUSG00000015120.17"/>
</dbReference>
<dbReference type="Ensembl" id="ENSMUST00000174031.9">
    <property type="protein sequence ID" value="ENSMUSP00000134350.2"/>
    <property type="gene ID" value="ENSMUSG00000015120.17"/>
</dbReference>
<dbReference type="Ensembl" id="ENSMUST00000249681.1">
    <property type="protein sequence ID" value="ENSMUSP00000159856.1"/>
    <property type="gene ID" value="ENSMUSG00000015120.17"/>
</dbReference>
<dbReference type="Ensembl" id="ENSMUST00000249682.1">
    <property type="protein sequence ID" value="ENSMUSP00000159858.1"/>
    <property type="gene ID" value="ENSMUSG00000015120.17"/>
</dbReference>
<dbReference type="Ensembl" id="ENSMUST00000249683.1">
    <property type="protein sequence ID" value="ENSMUSP00000159859.1"/>
    <property type="gene ID" value="ENSMUSG00000015120.17"/>
</dbReference>
<dbReference type="Ensembl" id="ENSMUST00000249684.1">
    <property type="protein sequence ID" value="ENSMUSP00000159860.1"/>
    <property type="gene ID" value="ENSMUSG00000015120.17"/>
</dbReference>
<dbReference type="Ensembl" id="ENSMUST00000249686.1">
    <property type="protein sequence ID" value="ENSMUSP00000159861.1"/>
    <property type="gene ID" value="ENSMUSG00000015120.17"/>
</dbReference>
<dbReference type="Ensembl" id="ENSMUST00000249688.1">
    <property type="protein sequence ID" value="ENSMUSP00000159863.1"/>
    <property type="gene ID" value="ENSMUSG00000015120.17"/>
</dbReference>
<dbReference type="Ensembl" id="ENSMUST00000249689.1">
    <property type="protein sequence ID" value="ENSMUSP00000159864.1"/>
    <property type="gene ID" value="ENSMUSG00000015120.17"/>
</dbReference>
<dbReference type="Ensembl" id="ENSMUST00000249690.1">
    <property type="protein sequence ID" value="ENSMUSP00000159865.1"/>
    <property type="gene ID" value="ENSMUSG00000015120.17"/>
</dbReference>
<dbReference type="Ensembl" id="ENSMUST00000249695.1">
    <property type="protein sequence ID" value="ENSMUSP00000159870.1"/>
    <property type="gene ID" value="ENSMUSG00000015120.17"/>
</dbReference>
<dbReference type="Ensembl" id="ENSMUST00000249698.1">
    <property type="protein sequence ID" value="ENSMUSP00000159872.1"/>
    <property type="gene ID" value="ENSMUSG00000015120.17"/>
</dbReference>
<dbReference type="Ensembl" id="ENSMUST00000249699.1">
    <property type="protein sequence ID" value="ENSMUSP00000159873.1"/>
    <property type="gene ID" value="ENSMUSG00000015120.17"/>
</dbReference>
<dbReference type="Ensembl" id="ENSMUST00000249700.1">
    <property type="protein sequence ID" value="ENSMUSP00000159874.1"/>
    <property type="gene ID" value="ENSMUSG00000015120.17"/>
</dbReference>
<dbReference type="Ensembl" id="ENSMUST00000249701.1">
    <property type="protein sequence ID" value="ENSMUSP00000159875.1"/>
    <property type="gene ID" value="ENSMUSG00000015120.17"/>
</dbReference>
<dbReference type="Ensembl" id="ENSMUST00000249703.1">
    <property type="protein sequence ID" value="ENSMUSP00000159877.1"/>
    <property type="gene ID" value="ENSMUSG00000015120.17"/>
</dbReference>
<dbReference type="Ensembl" id="ENSMUST00000249705.1">
    <property type="protein sequence ID" value="ENSMUSP00000159879.1"/>
    <property type="gene ID" value="ENSMUSG00000015120.17"/>
</dbReference>
<dbReference type="Ensembl" id="ENSMUST00000249707.1">
    <property type="protein sequence ID" value="ENSMUSP00000159881.1"/>
    <property type="gene ID" value="ENSMUSG00000015120.17"/>
</dbReference>
<dbReference type="GeneID" id="22196"/>
<dbReference type="KEGG" id="mmu:22196"/>
<dbReference type="UCSC" id="uc008bai.2">
    <property type="organism name" value="mouse"/>
</dbReference>
<dbReference type="AGR" id="MGI:107365"/>
<dbReference type="CTD" id="7329"/>
<dbReference type="MGI" id="MGI:107365">
    <property type="gene designation" value="Ube2i"/>
</dbReference>
<dbReference type="VEuPathDB" id="HostDB:ENSMUSG00000015120"/>
<dbReference type="eggNOG" id="KOG0424">
    <property type="taxonomic scope" value="Eukaryota"/>
</dbReference>
<dbReference type="GeneTree" id="ENSGT00550000075088"/>
<dbReference type="HOGENOM" id="CLU_030988_12_0_1"/>
<dbReference type="InParanoid" id="P63280"/>
<dbReference type="OMA" id="TWECGIP"/>
<dbReference type="OrthoDB" id="6600758at2759"/>
<dbReference type="PhylomeDB" id="P63280"/>
<dbReference type="TreeFam" id="TF101122"/>
<dbReference type="Reactome" id="R-MMU-196791">
    <property type="pathway name" value="Vitamin D (calciferol) metabolism"/>
</dbReference>
<dbReference type="Reactome" id="R-MMU-3065678">
    <property type="pathway name" value="SUMO is transferred from E1 to E2 (UBE2I, UBC9)"/>
</dbReference>
<dbReference type="Reactome" id="R-MMU-3108214">
    <property type="pathway name" value="SUMOylation of DNA damage response and repair proteins"/>
</dbReference>
<dbReference type="Reactome" id="R-MMU-3232118">
    <property type="pathway name" value="SUMOylation of transcription factors"/>
</dbReference>
<dbReference type="Reactome" id="R-MMU-3232142">
    <property type="pathway name" value="SUMOylation of ubiquitinylation proteins"/>
</dbReference>
<dbReference type="Reactome" id="R-MMU-3899300">
    <property type="pathway name" value="SUMOylation of transcription cofactors"/>
</dbReference>
<dbReference type="Reactome" id="R-MMU-4085377">
    <property type="pathway name" value="SUMOylation of SUMOylation proteins"/>
</dbReference>
<dbReference type="Reactome" id="R-MMU-4090294">
    <property type="pathway name" value="SUMOylation of intracellular receptors"/>
</dbReference>
<dbReference type="Reactome" id="R-MMU-4551638">
    <property type="pathway name" value="SUMOylation of chromatin organization proteins"/>
</dbReference>
<dbReference type="Reactome" id="R-MMU-4570464">
    <property type="pathway name" value="SUMOylation of RNA binding proteins"/>
</dbReference>
<dbReference type="Reactome" id="R-MMU-4615885">
    <property type="pathway name" value="SUMOylation of DNA replication proteins"/>
</dbReference>
<dbReference type="Reactome" id="R-MMU-4655427">
    <property type="pathway name" value="SUMOylation of DNA methylation proteins"/>
</dbReference>
<dbReference type="Reactome" id="R-MMU-4755510">
    <property type="pathway name" value="SUMOylation of immune response proteins"/>
</dbReference>
<dbReference type="Reactome" id="R-MMU-5693565">
    <property type="pathway name" value="Recruitment and ATM-mediated phosphorylation of repair and signaling proteins at DNA double strand breaks"/>
</dbReference>
<dbReference type="Reactome" id="R-MMU-5693607">
    <property type="pathway name" value="Processing of DNA double-strand break ends"/>
</dbReference>
<dbReference type="Reactome" id="R-MMU-5696395">
    <property type="pathway name" value="Formation of Incision Complex in GG-NER"/>
</dbReference>
<dbReference type="Reactome" id="R-MMU-8866904">
    <property type="pathway name" value="Negative regulation of activity of TFAP2 (AP-2) family transcription factors"/>
</dbReference>
<dbReference type="Reactome" id="R-MMU-9615933">
    <property type="pathway name" value="Postmitotic nuclear pore complex (NPC) reformation"/>
</dbReference>
<dbReference type="Reactome" id="R-MMU-9793242">
    <property type="pathway name" value="SUMOylation of nuclear envelope proteins"/>
</dbReference>
<dbReference type="Reactome" id="R-MMU-9856649">
    <property type="pathway name" value="Transcriptional and post-translational regulation of MITF-M expression and activity"/>
</dbReference>
<dbReference type="UniPathway" id="UPA00886"/>
<dbReference type="BioGRID-ORCS" id="22196">
    <property type="hits" value="26 hits in 81 CRISPR screens"/>
</dbReference>
<dbReference type="ChiTaRS" id="Ube2i">
    <property type="organism name" value="mouse"/>
</dbReference>
<dbReference type="EvolutionaryTrace" id="P63280"/>
<dbReference type="PRO" id="PR:P63280"/>
<dbReference type="Proteomes" id="UP000000589">
    <property type="component" value="Chromosome 17"/>
</dbReference>
<dbReference type="RNAct" id="P63280">
    <property type="molecule type" value="protein"/>
</dbReference>
<dbReference type="Bgee" id="ENSMUSG00000015120">
    <property type="expression patterns" value="Expressed in animal zygote and 224 other cell types or tissues"/>
</dbReference>
<dbReference type="ExpressionAtlas" id="P63280">
    <property type="expression patterns" value="baseline and differential"/>
</dbReference>
<dbReference type="GO" id="GO:0005737">
    <property type="term" value="C:cytoplasm"/>
    <property type="evidence" value="ECO:0000266"/>
    <property type="project" value="MGI"/>
</dbReference>
<dbReference type="GO" id="GO:0005829">
    <property type="term" value="C:cytosol"/>
    <property type="evidence" value="ECO:0000304"/>
    <property type="project" value="Reactome"/>
</dbReference>
<dbReference type="GO" id="GO:0098978">
    <property type="term" value="C:glutamatergic synapse"/>
    <property type="evidence" value="ECO:0000314"/>
    <property type="project" value="SynGO"/>
</dbReference>
<dbReference type="GO" id="GO:0016604">
    <property type="term" value="C:nuclear body"/>
    <property type="evidence" value="ECO:0000314"/>
    <property type="project" value="UniProtKB"/>
</dbReference>
<dbReference type="GO" id="GO:0005643">
    <property type="term" value="C:nuclear pore"/>
    <property type="evidence" value="ECO:0000303"/>
    <property type="project" value="ComplexPortal"/>
</dbReference>
<dbReference type="GO" id="GO:0005654">
    <property type="term" value="C:nucleoplasm"/>
    <property type="evidence" value="ECO:0000314"/>
    <property type="project" value="MGI"/>
</dbReference>
<dbReference type="GO" id="GO:0005634">
    <property type="term" value="C:nucleus"/>
    <property type="evidence" value="ECO:0000266"/>
    <property type="project" value="MGI"/>
</dbReference>
<dbReference type="GO" id="GO:0016605">
    <property type="term" value="C:PML body"/>
    <property type="evidence" value="ECO:0007669"/>
    <property type="project" value="Ensembl"/>
</dbReference>
<dbReference type="GO" id="GO:0099524">
    <property type="term" value="C:postsynaptic cytosol"/>
    <property type="evidence" value="ECO:0000314"/>
    <property type="project" value="SynGO"/>
</dbReference>
<dbReference type="GO" id="GO:0099523">
    <property type="term" value="C:presynaptic cytosol"/>
    <property type="evidence" value="ECO:0000314"/>
    <property type="project" value="SynGO"/>
</dbReference>
<dbReference type="GO" id="GO:0098685">
    <property type="term" value="C:Schaffer collateral - CA1 synapse"/>
    <property type="evidence" value="ECO:0000314"/>
    <property type="project" value="SynGO"/>
</dbReference>
<dbReference type="GO" id="GO:0106068">
    <property type="term" value="C:SUMO ligase complex"/>
    <property type="evidence" value="ECO:0000314"/>
    <property type="project" value="MGI"/>
</dbReference>
<dbReference type="GO" id="GO:0005524">
    <property type="term" value="F:ATP binding"/>
    <property type="evidence" value="ECO:0007669"/>
    <property type="project" value="UniProtKB-KW"/>
</dbReference>
<dbReference type="GO" id="GO:0043398">
    <property type="term" value="F:HLH domain binding"/>
    <property type="evidence" value="ECO:0000353"/>
    <property type="project" value="UniProtKB"/>
</dbReference>
<dbReference type="GO" id="GO:0071535">
    <property type="term" value="F:RING-like zinc finger domain binding"/>
    <property type="evidence" value="ECO:0007669"/>
    <property type="project" value="Ensembl"/>
</dbReference>
<dbReference type="GO" id="GO:0044388">
    <property type="term" value="F:small protein activating enzyme binding"/>
    <property type="evidence" value="ECO:0007669"/>
    <property type="project" value="Ensembl"/>
</dbReference>
<dbReference type="GO" id="GO:0061656">
    <property type="term" value="F:SUMO conjugating enzyme activity"/>
    <property type="evidence" value="ECO:0000314"/>
    <property type="project" value="MGI"/>
</dbReference>
<dbReference type="GO" id="GO:0001221">
    <property type="term" value="F:transcription coregulator binding"/>
    <property type="evidence" value="ECO:0007669"/>
    <property type="project" value="Ensembl"/>
</dbReference>
<dbReference type="GO" id="GO:0051301">
    <property type="term" value="P:cell division"/>
    <property type="evidence" value="ECO:0007669"/>
    <property type="project" value="UniProtKB-KW"/>
</dbReference>
<dbReference type="GO" id="GO:0007059">
    <property type="term" value="P:chromosome segregation"/>
    <property type="evidence" value="ECO:0007669"/>
    <property type="project" value="UniProtKB-KW"/>
</dbReference>
<dbReference type="GO" id="GO:0050804">
    <property type="term" value="P:modulation of chemical synaptic transmission"/>
    <property type="evidence" value="ECO:0000314"/>
    <property type="project" value="SynGO"/>
</dbReference>
<dbReference type="GO" id="GO:0000122">
    <property type="term" value="P:negative regulation of transcription by RNA polymerase II"/>
    <property type="evidence" value="ECO:0000315"/>
    <property type="project" value="BHF-UCL"/>
</dbReference>
<dbReference type="GO" id="GO:0051168">
    <property type="term" value="P:nuclear export"/>
    <property type="evidence" value="ECO:0000269"/>
    <property type="project" value="ComplexPortal"/>
</dbReference>
<dbReference type="GO" id="GO:0043123">
    <property type="term" value="P:positive regulation of canonical NF-kappaB signal transduction"/>
    <property type="evidence" value="ECO:0000314"/>
    <property type="project" value="MGI"/>
</dbReference>
<dbReference type="GO" id="GO:0030335">
    <property type="term" value="P:positive regulation of cell migration"/>
    <property type="evidence" value="ECO:0007669"/>
    <property type="project" value="Ensembl"/>
</dbReference>
<dbReference type="GO" id="GO:0036211">
    <property type="term" value="P:protein modification process"/>
    <property type="evidence" value="ECO:0000304"/>
    <property type="project" value="ProtInc"/>
</dbReference>
<dbReference type="GO" id="GO:0016925">
    <property type="term" value="P:protein sumoylation"/>
    <property type="evidence" value="ECO:0000314"/>
    <property type="project" value="MGI"/>
</dbReference>
<dbReference type="CDD" id="cd23798">
    <property type="entry name" value="UBCc_UBE2I"/>
    <property type="match status" value="1"/>
</dbReference>
<dbReference type="FunFam" id="3.10.110.10:FF:000013">
    <property type="entry name" value="SUMO-conjugating enzyme UBC9"/>
    <property type="match status" value="1"/>
</dbReference>
<dbReference type="Gene3D" id="3.10.110.10">
    <property type="entry name" value="Ubiquitin Conjugating Enzyme"/>
    <property type="match status" value="1"/>
</dbReference>
<dbReference type="InterPro" id="IPR050113">
    <property type="entry name" value="Ub_conjugating_enzyme"/>
</dbReference>
<dbReference type="InterPro" id="IPR000608">
    <property type="entry name" value="UBQ-conjugat_E2_core"/>
</dbReference>
<dbReference type="InterPro" id="IPR023313">
    <property type="entry name" value="UBQ-conjugating_AS"/>
</dbReference>
<dbReference type="InterPro" id="IPR016135">
    <property type="entry name" value="UBQ-conjugating_enzyme/RWD"/>
</dbReference>
<dbReference type="PANTHER" id="PTHR24067">
    <property type="entry name" value="UBIQUITIN-CONJUGATING ENZYME E2"/>
    <property type="match status" value="1"/>
</dbReference>
<dbReference type="Pfam" id="PF00179">
    <property type="entry name" value="UQ_con"/>
    <property type="match status" value="1"/>
</dbReference>
<dbReference type="SMART" id="SM00212">
    <property type="entry name" value="UBCc"/>
    <property type="match status" value="1"/>
</dbReference>
<dbReference type="SUPFAM" id="SSF54495">
    <property type="entry name" value="UBC-like"/>
    <property type="match status" value="1"/>
</dbReference>
<dbReference type="PROSITE" id="PS00183">
    <property type="entry name" value="UBC_1"/>
    <property type="match status" value="1"/>
</dbReference>
<dbReference type="PROSITE" id="PS50127">
    <property type="entry name" value="UBC_2"/>
    <property type="match status" value="1"/>
</dbReference>
<gene>
    <name type="primary">Ube2i</name>
    <name type="synonym">Ubc9</name>
    <name type="synonym">Ubce2i</name>
    <name type="synonym">Ubce9</name>
</gene>
<organism>
    <name type="scientific">Mus musculus</name>
    <name type="common">Mouse</name>
    <dbReference type="NCBI Taxonomy" id="10090"/>
    <lineage>
        <taxon>Eukaryota</taxon>
        <taxon>Metazoa</taxon>
        <taxon>Chordata</taxon>
        <taxon>Craniata</taxon>
        <taxon>Vertebrata</taxon>
        <taxon>Euteleostomi</taxon>
        <taxon>Mammalia</taxon>
        <taxon>Eutheria</taxon>
        <taxon>Euarchontoglires</taxon>
        <taxon>Glires</taxon>
        <taxon>Rodentia</taxon>
        <taxon>Myomorpha</taxon>
        <taxon>Muroidea</taxon>
        <taxon>Muridae</taxon>
        <taxon>Murinae</taxon>
        <taxon>Mus</taxon>
        <taxon>Mus</taxon>
    </lineage>
</organism>
<comment type="function">
    <text evidence="2 7 8 10">Accepts the ubiquitin-like proteins SUMO1, SUMO2 and SUMO3 from the UBLE1A-UBLE1B E1 complex and catalyzes their covalent attachment to other proteins with the help of an E3 ligase such as RANBP2, CBX4 and ZNF451. Can catalyze the formation of poly-SUMO chains. Essential for nuclear architecture, chromosome segregation and embryonic viability. Necessary for sumoylation of FOXL2 and KAT5 (By similarity). Sumoylates p53/TP53 at 'Lys-386'. Mediates sumoylation of ERCC6 which is essential for its transcription-coupled nucleotide excision repair activity (By similarity).</text>
</comment>
<comment type="pathway">
    <text>Protein modification; protein sumoylation.</text>
</comment>
<comment type="subunit">
    <text evidence="2 3 5 6 8 10 11 14">Forms a complex with SENP6 and UBE2I in response to UV irradiation (By similarity). Forms a tight complex with RANGAP1 and RANBP2 (By similarity). Identified in a complex with SUMO2 and UBE2I, where one ZNF451 interacts with one UBE2I and two SUMO2 chains, one bound to the UBE2I active site and the other to another region of the same UBE2I molecule (By similarity). Interacts with SETX (By similarity). Interacts with HIPK1 and HIPK2 (PubMed:10535925). Interacts with PPM1J (PubMed:12633878). Interacts with RASD2 (By similarity). Interacts with TCF3 (PubMed:9409784). Interacts with NR2C1; the interaction promotes its sumoylation (PubMed:17187077). Interacts with SIAH1 (By similarity). Interacts with PARP (By similarity). Interacts with various transcription factors such as TFAP2A, TFAP2B, and TFAP2C (By similarity). Interacts with AR (By similarity). Interacts with ETS1 (By similarity). Interacts with SOX4 (By similarity). Interacts with RWDD3; the interaction enhances the sumoylation of a number of proteins such as HIF1A and I-kappa-B (By similarity). Interacts with FOXL2 (By similarity). Interacts with DNM1l (via its GTPase and B domains); the interaction promotes sumoylation of DNM1L, mainly in its B domain (By similarity). Interacts with NFATC2IP; this inhibits formation of poly-SUMO chains (By similarity). Interacts with FHIT (By similarity). Interacts with PRKRA and p53/TP53 (PubMed:22214662). Interacts with UHRF2 (By similarity). Interacts with NR3C1 and this interaction is enhanced in the presence of RWDD3 (By similarity). Interacts with MTA1 (By similarity). Interacts with ZNF451 (By similarity). Interacts with CPEB3 (PubMed:26074071). Interacts with SUMO1, SUMO2, and SUMO3 (By similarity). Interacts with IPO13 (By similarity). Interacts with DNMT1 (By similarity).</text>
</comment>
<comment type="interaction">
    <interactant intactId="EBI-80180">
        <id>P63280</id>
    </interactant>
    <interactant intactId="EBI-7070449">
        <id>P08152</id>
        <label>Egr2</label>
    </interactant>
    <organismsDiffer>false</organismsDiffer>
    <experiments>2</experiments>
</comment>
<comment type="interaction">
    <interactant intactId="EBI-80180">
        <id>P63280</id>
    </interactant>
    <interactant intactId="EBI-15617004">
        <id>Q505F1</id>
        <label>Nr2c1</label>
    </interactant>
    <organismsDiffer>false</organismsDiffer>
    <experiments>3</experiments>
</comment>
<comment type="subcellular location">
    <subcellularLocation>
        <location evidence="9 12 13">Nucleus</location>
    </subcellularLocation>
    <subcellularLocation>
        <location evidence="9 13">Cytoplasm</location>
    </subcellularLocation>
    <text evidence="2 9">Mainly nuclear (PubMed:18681895). In spermatocytes, localizes in synaptonemal complexes (By similarity). Recruited by BCL11A into the nuclear body (PubMed:18681895).</text>
</comment>
<comment type="tissue specificity">
    <text evidence="14">Present in spleen, kidney, lung, brain, heart and testis (at protein level).</text>
</comment>
<comment type="PTM">
    <text evidence="2">Phosphorylation at Ser-71 significantly enhances SUMOylation activity.</text>
</comment>
<comment type="disruption phenotype">
    <text evidence="7">Death prior to E7.5 due to major defects in nuclear organization.</text>
</comment>
<comment type="similarity">
    <text evidence="4">Belongs to the ubiquitin-conjugating enzyme family.</text>
</comment>
<proteinExistence type="evidence at protein level"/>